<reference evidence="3" key="1">
    <citation type="journal article" date="2018" name="Biochemistry">
        <title>Ampulexins: A New Family of Peptides in Venom of the Emerald Jewel Wasp, Ampulex compressa.</title>
        <authorList>
            <person name="Moore E.L."/>
            <person name="Arvidson R."/>
            <person name="Banks C."/>
            <person name="Urenda J.P."/>
            <person name="Duong E."/>
            <person name="Mohammed H."/>
            <person name="Adams M.E."/>
        </authorList>
    </citation>
    <scope>NUCLEOTIDE SEQUENCE [MRNA]</scope>
    <scope>PROTEIN SEQUENCE OF 28-50</scope>
    <scope>FUNCTION</scope>
    <scope>SUBUNIT</scope>
    <scope>SUBCELLULAR LOCATION</scope>
    <scope>TISSUE SPECIFICITY</scope>
    <scope>MASS SPECTROMETRY</scope>
    <source>
        <tissue evidence="2">Venom</tissue>
        <tissue evidence="2">Venom gland</tissue>
    </source>
</reference>
<reference evidence="6" key="2">
    <citation type="submission" date="2017-09" db="EMBL/GenBank/DDBJ databases">
        <authorList>
            <person name="Ehlers B."/>
            <person name="Leendertz F.H."/>
        </authorList>
    </citation>
    <scope>NUCLEOTIDE SEQUENCE [MRNA]</scope>
</reference>
<protein>
    <recommendedName>
        <fullName evidence="2">Ampulexin 2</fullName>
        <shortName evidence="2">Axn2</shortName>
    </recommendedName>
</protein>
<keyword id="KW-0903">Direct protein sequencing</keyword>
<keyword id="KW-1015">Disulfide bond</keyword>
<keyword id="KW-0964">Secreted</keyword>
<keyword id="KW-0732">Signal</keyword>
<organism evidence="5">
    <name type="scientific">Ampulex compressa</name>
    <name type="common">Emerald cockroach wasp</name>
    <dbReference type="NCBI Taxonomy" id="860918"/>
    <lineage>
        <taxon>Eukaryota</taxon>
        <taxon>Metazoa</taxon>
        <taxon>Ecdysozoa</taxon>
        <taxon>Arthropoda</taxon>
        <taxon>Hexapoda</taxon>
        <taxon>Insecta</taxon>
        <taxon>Pterygota</taxon>
        <taxon>Neoptera</taxon>
        <taxon>Endopterygota</taxon>
        <taxon>Hymenoptera</taxon>
        <taxon>Apocrita</taxon>
        <taxon>Aculeata</taxon>
        <taxon>Apoidea</taxon>
        <taxon>Ampulicidae</taxon>
        <taxon>Ampulicini</taxon>
        <taxon>Ampulex</taxon>
    </lineage>
</organism>
<comment type="function">
    <text evidence="1">Amphipathic peptide which probably adopts an alpha-helical structure. Has no antimicrobial activity against E.coli DH5alpha or B.thuringiensis. Is not cytotoxic in vitro.</text>
</comment>
<comment type="subunit">
    <text evidence="1">Dimer; disulfide-linked.</text>
</comment>
<comment type="subcellular location">
    <subcellularLocation>
        <location evidence="1">Secreted</location>
    </subcellularLocation>
</comment>
<comment type="tissue specificity">
    <text evidence="1">Expressed in venom sac and, to a lesser extent, in venom gland. Not expressed in brain.</text>
</comment>
<comment type="mass spectrometry">
    <text>Dimer.</text>
</comment>
<sequence>MKAIMVLFYVMTLTIIGSFSMVSGSPGQNDYVNPKLQFACDLLQKAKERQ</sequence>
<proteinExistence type="evidence at protein level"/>
<evidence type="ECO:0000269" key="1">
    <source>
    </source>
</evidence>
<evidence type="ECO:0000303" key="2">
    <source>
    </source>
</evidence>
<evidence type="ECO:0000305" key="3"/>
<evidence type="ECO:0000305" key="4">
    <source>
    </source>
</evidence>
<evidence type="ECO:0000312" key="5">
    <source>
        <dbReference type="EMBL" id="ARK19788.1"/>
    </source>
</evidence>
<evidence type="ECO:0000312" key="6">
    <source>
        <dbReference type="EMBL" id="AUX80732.1"/>
    </source>
</evidence>
<accession>A0A1W6EVN2</accession>
<name>AMPU2_AMPCP</name>
<dbReference type="EMBL" id="MF804415">
    <property type="protein sequence ID" value="AUX80732.1"/>
    <property type="molecule type" value="mRNA"/>
</dbReference>
<dbReference type="EMBL" id="KY563379">
    <property type="protein sequence ID" value="ARK19788.1"/>
    <property type="molecule type" value="mRNA"/>
</dbReference>
<dbReference type="SMR" id="A0A1W6EVN2"/>
<dbReference type="GO" id="GO:0005576">
    <property type="term" value="C:extracellular region"/>
    <property type="evidence" value="ECO:0007669"/>
    <property type="project" value="UniProtKB-SubCell"/>
</dbReference>
<feature type="signal peptide" evidence="1">
    <location>
        <begin position="1"/>
        <end position="26"/>
    </location>
</feature>
<feature type="peptide" id="PRO_0000444896" description="Ampulexin 2" evidence="1">
    <location>
        <begin position="27"/>
        <end position="50"/>
    </location>
</feature>
<feature type="disulfide bond" description="Interchain" evidence="4">
    <location>
        <position position="40"/>
    </location>
</feature>